<evidence type="ECO:0000255" key="1">
    <source>
        <dbReference type="HAMAP-Rule" id="MF_00298"/>
    </source>
</evidence>
<reference key="1">
    <citation type="submission" date="2008-04" db="EMBL/GenBank/DDBJ databases">
        <title>Complete sequence of chromosome 1 of Burkholderia ambifaria MC40-6.</title>
        <authorList>
            <person name="Copeland A."/>
            <person name="Lucas S."/>
            <person name="Lapidus A."/>
            <person name="Glavina del Rio T."/>
            <person name="Dalin E."/>
            <person name="Tice H."/>
            <person name="Pitluck S."/>
            <person name="Chain P."/>
            <person name="Malfatti S."/>
            <person name="Shin M."/>
            <person name="Vergez L."/>
            <person name="Lang D."/>
            <person name="Schmutz J."/>
            <person name="Larimer F."/>
            <person name="Land M."/>
            <person name="Hauser L."/>
            <person name="Kyrpides N."/>
            <person name="Lykidis A."/>
            <person name="Ramette A."/>
            <person name="Konstantinidis K."/>
            <person name="Tiedje J."/>
            <person name="Richardson P."/>
        </authorList>
    </citation>
    <scope>NUCLEOTIDE SEQUENCE [LARGE SCALE GENOMIC DNA]</scope>
    <source>
        <strain>MC40-6</strain>
    </source>
</reference>
<name>RPPH_BURA4</name>
<comment type="function">
    <text evidence="1">Accelerates the degradation of transcripts by removing pyrophosphate from the 5'-end of triphosphorylated RNA, leading to a more labile monophosphorylated state that can stimulate subsequent ribonuclease cleavage.</text>
</comment>
<comment type="cofactor">
    <cofactor evidence="1">
        <name>a divalent metal cation</name>
        <dbReference type="ChEBI" id="CHEBI:60240"/>
    </cofactor>
</comment>
<comment type="similarity">
    <text evidence="1">Belongs to the Nudix hydrolase family. RppH subfamily.</text>
</comment>
<gene>
    <name evidence="1" type="primary">rppH</name>
    <name evidence="1" type="synonym">nudH</name>
    <name type="ordered locus">BamMC406_0514</name>
</gene>
<feature type="chain" id="PRO_1000115267" description="RNA pyrophosphohydrolase">
    <location>
        <begin position="1"/>
        <end position="216"/>
    </location>
</feature>
<feature type="domain" description="Nudix hydrolase" evidence="1">
    <location>
        <begin position="6"/>
        <end position="149"/>
    </location>
</feature>
<feature type="short sequence motif" description="Nudix box">
    <location>
        <begin position="38"/>
        <end position="59"/>
    </location>
</feature>
<keyword id="KW-0378">Hydrolase</keyword>
<proteinExistence type="inferred from homology"/>
<protein>
    <recommendedName>
        <fullName evidence="1">RNA pyrophosphohydrolase</fullName>
        <ecNumber evidence="1">3.6.1.-</ecNumber>
    </recommendedName>
    <alternativeName>
        <fullName evidence="1">(Di)nucleoside polyphosphate hydrolase</fullName>
    </alternativeName>
</protein>
<dbReference type="EC" id="3.6.1.-" evidence="1"/>
<dbReference type="EMBL" id="CP001025">
    <property type="protein sequence ID" value="ACB63011.1"/>
    <property type="molecule type" value="Genomic_DNA"/>
</dbReference>
<dbReference type="RefSeq" id="WP_011655908.1">
    <property type="nucleotide sequence ID" value="NC_010551.1"/>
</dbReference>
<dbReference type="SMR" id="B1YSV0"/>
<dbReference type="KEGG" id="bac:BamMC406_0514"/>
<dbReference type="HOGENOM" id="CLU_087195_0_1_4"/>
<dbReference type="OrthoDB" id="9816040at2"/>
<dbReference type="Proteomes" id="UP000001680">
    <property type="component" value="Chromosome 1"/>
</dbReference>
<dbReference type="GO" id="GO:0016462">
    <property type="term" value="F:pyrophosphatase activity"/>
    <property type="evidence" value="ECO:0007669"/>
    <property type="project" value="UniProtKB-ARBA"/>
</dbReference>
<dbReference type="CDD" id="cd03671">
    <property type="entry name" value="NUDIX_Ap4A_hydrolase_plant_like"/>
    <property type="match status" value="1"/>
</dbReference>
<dbReference type="Gene3D" id="3.90.79.10">
    <property type="entry name" value="Nucleoside Triphosphate Pyrophosphohydrolase"/>
    <property type="match status" value="1"/>
</dbReference>
<dbReference type="HAMAP" id="MF_00298">
    <property type="entry name" value="Nudix_RppH"/>
    <property type="match status" value="1"/>
</dbReference>
<dbReference type="InterPro" id="IPR020476">
    <property type="entry name" value="Nudix_hydrolase"/>
</dbReference>
<dbReference type="InterPro" id="IPR015797">
    <property type="entry name" value="NUDIX_hydrolase-like_dom_sf"/>
</dbReference>
<dbReference type="InterPro" id="IPR020084">
    <property type="entry name" value="NUDIX_hydrolase_CS"/>
</dbReference>
<dbReference type="InterPro" id="IPR000086">
    <property type="entry name" value="NUDIX_hydrolase_dom"/>
</dbReference>
<dbReference type="InterPro" id="IPR022927">
    <property type="entry name" value="RppH"/>
</dbReference>
<dbReference type="NCBIfam" id="NF001935">
    <property type="entry name" value="PRK00714.1-2"/>
    <property type="match status" value="1"/>
</dbReference>
<dbReference type="NCBIfam" id="NF001937">
    <property type="entry name" value="PRK00714.1-4"/>
    <property type="match status" value="1"/>
</dbReference>
<dbReference type="NCBIfam" id="NF001938">
    <property type="entry name" value="PRK00714.1-5"/>
    <property type="match status" value="1"/>
</dbReference>
<dbReference type="PANTHER" id="PTHR43736">
    <property type="entry name" value="ADP-RIBOSE PYROPHOSPHATASE"/>
    <property type="match status" value="1"/>
</dbReference>
<dbReference type="PANTHER" id="PTHR43736:SF1">
    <property type="entry name" value="DIHYDRONEOPTERIN TRIPHOSPHATE DIPHOSPHATASE"/>
    <property type="match status" value="1"/>
</dbReference>
<dbReference type="Pfam" id="PF00293">
    <property type="entry name" value="NUDIX"/>
    <property type="match status" value="1"/>
</dbReference>
<dbReference type="PRINTS" id="PR00502">
    <property type="entry name" value="NUDIXFAMILY"/>
</dbReference>
<dbReference type="SUPFAM" id="SSF55811">
    <property type="entry name" value="Nudix"/>
    <property type="match status" value="1"/>
</dbReference>
<dbReference type="PROSITE" id="PS51462">
    <property type="entry name" value="NUDIX"/>
    <property type="match status" value="1"/>
</dbReference>
<dbReference type="PROSITE" id="PS00893">
    <property type="entry name" value="NUDIX_BOX"/>
    <property type="match status" value="1"/>
</dbReference>
<sequence>MLDREGFRPNVGIILLNARNEVFWGKRLREHSWQFPQGGIKYGETPMQAMYRELHEETGLHPEHVKIIGRTRDWLRYEVPDKFIKREVRGHYRGQKQIWFLLRMVGRDCDICLRATDHPEFDAWRWNEYWVPLDAVIEFKRDVYQLALTELSRFLRRPAQRADKPQGPRPSSRYPRVIGTQSQQTLTIVDTSVVCSEIEVEASTLDEMPPRVIVGK</sequence>
<organism>
    <name type="scientific">Burkholderia ambifaria (strain MC40-6)</name>
    <dbReference type="NCBI Taxonomy" id="398577"/>
    <lineage>
        <taxon>Bacteria</taxon>
        <taxon>Pseudomonadati</taxon>
        <taxon>Pseudomonadota</taxon>
        <taxon>Betaproteobacteria</taxon>
        <taxon>Burkholderiales</taxon>
        <taxon>Burkholderiaceae</taxon>
        <taxon>Burkholderia</taxon>
        <taxon>Burkholderia cepacia complex</taxon>
    </lineage>
</organism>
<accession>B1YSV0</accession>